<dbReference type="EMBL" id="X98355">
    <property type="protein sequence ID" value="CAA67000.1"/>
    <property type="molecule type" value="mRNA"/>
</dbReference>
<dbReference type="EMBL" id="CM000126">
    <property type="protein sequence ID" value="EAY76233.1"/>
    <property type="molecule type" value="Genomic_DNA"/>
</dbReference>
<dbReference type="PIR" id="T03762">
    <property type="entry name" value="T03762"/>
</dbReference>
<dbReference type="SMR" id="A2WW87"/>
<dbReference type="STRING" id="39946.A2WW87"/>
<dbReference type="EnsemblPlants" id="BGIOSGA004670-TA">
    <property type="protein sequence ID" value="BGIOSGA004670-PA"/>
    <property type="gene ID" value="BGIOSGA004670"/>
</dbReference>
<dbReference type="EnsemblPlants" id="OsIR64_01g0036320.01">
    <property type="protein sequence ID" value="OsIR64_01g0036320.01"/>
    <property type="gene ID" value="OsIR64_01g0036320"/>
</dbReference>
<dbReference type="EnsemblPlants" id="OsIR64_01g0036320.02">
    <property type="protein sequence ID" value="OsIR64_01g0036320.02"/>
    <property type="gene ID" value="OsIR64_01g0036320"/>
</dbReference>
<dbReference type="Gramene" id="BGIOSGA004670-TA">
    <property type="protein sequence ID" value="BGIOSGA004670-PA"/>
    <property type="gene ID" value="BGIOSGA004670"/>
</dbReference>
<dbReference type="Gramene" id="OsIR64_01g0036320.01">
    <property type="protein sequence ID" value="OsIR64_01g0036320.01"/>
    <property type="gene ID" value="OsIR64_01g0036320"/>
</dbReference>
<dbReference type="Gramene" id="OsIR64_01g0036320.02">
    <property type="protein sequence ID" value="OsIR64_01g0036320.02"/>
    <property type="gene ID" value="OsIR64_01g0036320"/>
</dbReference>
<dbReference type="HOGENOM" id="CLU_023548_1_1_1"/>
<dbReference type="OMA" id="WHELYSE"/>
<dbReference type="Proteomes" id="UP000007015">
    <property type="component" value="Chromosome 1"/>
</dbReference>
<dbReference type="GO" id="GO:0005634">
    <property type="term" value="C:nucleus"/>
    <property type="evidence" value="ECO:0007669"/>
    <property type="project" value="UniProtKB-SubCell"/>
</dbReference>
<dbReference type="GO" id="GO:0003677">
    <property type="term" value="F:DNA binding"/>
    <property type="evidence" value="ECO:0007669"/>
    <property type="project" value="UniProtKB-KW"/>
</dbReference>
<dbReference type="GO" id="GO:0048653">
    <property type="term" value="P:anther development"/>
    <property type="evidence" value="ECO:0007669"/>
    <property type="project" value="EnsemblPlants"/>
</dbReference>
<dbReference type="GO" id="GO:0030154">
    <property type="term" value="P:cell differentiation"/>
    <property type="evidence" value="ECO:0007669"/>
    <property type="project" value="UniProtKB-KW"/>
</dbReference>
<dbReference type="GO" id="GO:0009555">
    <property type="term" value="P:pollen development"/>
    <property type="evidence" value="ECO:0007669"/>
    <property type="project" value="EnsemblPlants"/>
</dbReference>
<dbReference type="GO" id="GO:0006355">
    <property type="term" value="P:regulation of DNA-templated transcription"/>
    <property type="evidence" value="ECO:0007669"/>
    <property type="project" value="InterPro"/>
</dbReference>
<dbReference type="CDD" id="cd00167">
    <property type="entry name" value="SANT"/>
    <property type="match status" value="2"/>
</dbReference>
<dbReference type="FunFam" id="1.10.10.60:FF:000001">
    <property type="entry name" value="MYB-related transcription factor"/>
    <property type="match status" value="1"/>
</dbReference>
<dbReference type="FunFam" id="1.10.10.60:FF:000119">
    <property type="entry name" value="Transcription factor GAMYB"/>
    <property type="match status" value="1"/>
</dbReference>
<dbReference type="Gene3D" id="1.10.10.60">
    <property type="entry name" value="Homeodomain-like"/>
    <property type="match status" value="2"/>
</dbReference>
<dbReference type="InterPro" id="IPR016310">
    <property type="entry name" value="GAMYB-like"/>
</dbReference>
<dbReference type="InterPro" id="IPR009057">
    <property type="entry name" value="Homeodomain-like_sf"/>
</dbReference>
<dbReference type="InterPro" id="IPR017930">
    <property type="entry name" value="Myb_dom"/>
</dbReference>
<dbReference type="InterPro" id="IPR001005">
    <property type="entry name" value="SANT/Myb"/>
</dbReference>
<dbReference type="PANTHER" id="PTHR47995">
    <property type="entry name" value="TRANSCRIPTION FACTOR MYB33-RELATED"/>
    <property type="match status" value="1"/>
</dbReference>
<dbReference type="PANTHER" id="PTHR47995:SF18">
    <property type="entry name" value="TRANSCRIPTION FACTOR MYB65"/>
    <property type="match status" value="1"/>
</dbReference>
<dbReference type="Pfam" id="PF00249">
    <property type="entry name" value="Myb_DNA-binding"/>
    <property type="match status" value="2"/>
</dbReference>
<dbReference type="PIRSF" id="PIRSF001693">
    <property type="entry name" value="Transcription_factor_GAMYB"/>
    <property type="match status" value="1"/>
</dbReference>
<dbReference type="SMART" id="SM00717">
    <property type="entry name" value="SANT"/>
    <property type="match status" value="2"/>
</dbReference>
<dbReference type="SUPFAM" id="SSF46689">
    <property type="entry name" value="Homeodomain-like"/>
    <property type="match status" value="1"/>
</dbReference>
<dbReference type="PROSITE" id="PS51294">
    <property type="entry name" value="HTH_MYB"/>
    <property type="match status" value="2"/>
</dbReference>
<gene>
    <name type="primary">GAM1</name>
    <name type="ORF">OsI_004080</name>
</gene>
<feature type="chain" id="PRO_0000300237" description="Transcription factor GAMYB">
    <location>
        <begin position="1"/>
        <end position="553"/>
    </location>
</feature>
<feature type="domain" description="HTH myb-type 1" evidence="1">
    <location>
        <begin position="37"/>
        <end position="89"/>
    </location>
</feature>
<feature type="domain" description="HTH myb-type 2" evidence="1">
    <location>
        <begin position="90"/>
        <end position="144"/>
    </location>
</feature>
<feature type="DNA-binding region" description="H-T-H motif" evidence="1">
    <location>
        <begin position="65"/>
        <end position="89"/>
    </location>
</feature>
<feature type="DNA-binding region" description="H-T-H motif" evidence="1">
    <location>
        <begin position="117"/>
        <end position="140"/>
    </location>
</feature>
<feature type="region of interest" description="Disordered" evidence="2">
    <location>
        <begin position="1"/>
        <end position="45"/>
    </location>
</feature>
<feature type="region of interest" description="Disordered" evidence="2">
    <location>
        <begin position="464"/>
        <end position="488"/>
    </location>
</feature>
<feature type="compositionally biased region" description="Basic and acidic residues" evidence="2">
    <location>
        <begin position="1"/>
        <end position="17"/>
    </location>
</feature>
<feature type="compositionally biased region" description="Gly residues" evidence="2">
    <location>
        <begin position="27"/>
        <end position="38"/>
    </location>
</feature>
<feature type="sequence conflict" description="In Ref. 1; CAA67000." evidence="4" ref="1">
    <original>V</original>
    <variation>I</variation>
    <location>
        <position position="379"/>
    </location>
</feature>
<proteinExistence type="evidence at transcript level"/>
<reference key="1">
    <citation type="journal article" date="1997" name="Plant Cell Physiol.">
        <title>Cloning of a rice cDNA encoding a transcription factor homologous to barley GAMyb.</title>
        <authorList>
            <person name="Gubler F."/>
            <person name="Watts R.J."/>
            <person name="Kalla R."/>
            <person name="Matthews P."/>
            <person name="Keys M."/>
            <person name="Jacobsen J.V."/>
        </authorList>
    </citation>
    <scope>NUCLEOTIDE SEQUENCE [MRNA]</scope>
    <scope>FUNCTION</scope>
    <scope>INDUCTION</scope>
    <source>
        <strain>cv. IR36</strain>
        <tissue>Aleurone</tissue>
        <tissue>Endosperm</tissue>
    </source>
</reference>
<reference key="2">
    <citation type="journal article" date="2005" name="PLoS Biol.">
        <title>The genomes of Oryza sativa: a history of duplications.</title>
        <authorList>
            <person name="Yu J."/>
            <person name="Wang J."/>
            <person name="Lin W."/>
            <person name="Li S."/>
            <person name="Li H."/>
            <person name="Zhou J."/>
            <person name="Ni P."/>
            <person name="Dong W."/>
            <person name="Hu S."/>
            <person name="Zeng C."/>
            <person name="Zhang J."/>
            <person name="Zhang Y."/>
            <person name="Li R."/>
            <person name="Xu Z."/>
            <person name="Li S."/>
            <person name="Li X."/>
            <person name="Zheng H."/>
            <person name="Cong L."/>
            <person name="Lin L."/>
            <person name="Yin J."/>
            <person name="Geng J."/>
            <person name="Li G."/>
            <person name="Shi J."/>
            <person name="Liu J."/>
            <person name="Lv H."/>
            <person name="Li J."/>
            <person name="Wang J."/>
            <person name="Deng Y."/>
            <person name="Ran L."/>
            <person name="Shi X."/>
            <person name="Wang X."/>
            <person name="Wu Q."/>
            <person name="Li C."/>
            <person name="Ren X."/>
            <person name="Wang J."/>
            <person name="Wang X."/>
            <person name="Li D."/>
            <person name="Liu D."/>
            <person name="Zhang X."/>
            <person name="Ji Z."/>
            <person name="Zhao W."/>
            <person name="Sun Y."/>
            <person name="Zhang Z."/>
            <person name="Bao J."/>
            <person name="Han Y."/>
            <person name="Dong L."/>
            <person name="Ji J."/>
            <person name="Chen P."/>
            <person name="Wu S."/>
            <person name="Liu J."/>
            <person name="Xiao Y."/>
            <person name="Bu D."/>
            <person name="Tan J."/>
            <person name="Yang L."/>
            <person name="Ye C."/>
            <person name="Zhang J."/>
            <person name="Xu J."/>
            <person name="Zhou Y."/>
            <person name="Yu Y."/>
            <person name="Zhang B."/>
            <person name="Zhuang S."/>
            <person name="Wei H."/>
            <person name="Liu B."/>
            <person name="Lei M."/>
            <person name="Yu H."/>
            <person name="Li Y."/>
            <person name="Xu H."/>
            <person name="Wei S."/>
            <person name="He X."/>
            <person name="Fang L."/>
            <person name="Zhang Z."/>
            <person name="Zhang Y."/>
            <person name="Huang X."/>
            <person name="Su Z."/>
            <person name="Tong W."/>
            <person name="Li J."/>
            <person name="Tong Z."/>
            <person name="Li S."/>
            <person name="Ye J."/>
            <person name="Wang L."/>
            <person name="Fang L."/>
            <person name="Lei T."/>
            <person name="Chen C.-S."/>
            <person name="Chen H.-C."/>
            <person name="Xu Z."/>
            <person name="Li H."/>
            <person name="Huang H."/>
            <person name="Zhang F."/>
            <person name="Xu H."/>
            <person name="Li N."/>
            <person name="Zhao C."/>
            <person name="Li S."/>
            <person name="Dong L."/>
            <person name="Huang Y."/>
            <person name="Li L."/>
            <person name="Xi Y."/>
            <person name="Qi Q."/>
            <person name="Li W."/>
            <person name="Zhang B."/>
            <person name="Hu W."/>
            <person name="Zhang Y."/>
            <person name="Tian X."/>
            <person name="Jiao Y."/>
            <person name="Liang X."/>
            <person name="Jin J."/>
            <person name="Gao L."/>
            <person name="Zheng W."/>
            <person name="Hao B."/>
            <person name="Liu S.-M."/>
            <person name="Wang W."/>
            <person name="Yuan L."/>
            <person name="Cao M."/>
            <person name="McDermott J."/>
            <person name="Samudrala R."/>
            <person name="Wang J."/>
            <person name="Wong G.K.-S."/>
            <person name="Yang H."/>
        </authorList>
    </citation>
    <scope>NUCLEOTIDE SEQUENCE [LARGE SCALE GENOMIC DNA]</scope>
    <source>
        <strain>cv. 93-11</strain>
    </source>
</reference>
<organism>
    <name type="scientific">Oryza sativa subsp. indica</name>
    <name type="common">Rice</name>
    <dbReference type="NCBI Taxonomy" id="39946"/>
    <lineage>
        <taxon>Eukaryota</taxon>
        <taxon>Viridiplantae</taxon>
        <taxon>Streptophyta</taxon>
        <taxon>Embryophyta</taxon>
        <taxon>Tracheophyta</taxon>
        <taxon>Spermatophyta</taxon>
        <taxon>Magnoliopsida</taxon>
        <taxon>Liliopsida</taxon>
        <taxon>Poales</taxon>
        <taxon>Poaceae</taxon>
        <taxon>BOP clade</taxon>
        <taxon>Oryzoideae</taxon>
        <taxon>Oryzeae</taxon>
        <taxon>Oryzinae</taxon>
        <taxon>Oryza</taxon>
        <taxon>Oryza sativa</taxon>
    </lineage>
</organism>
<comment type="function">
    <text evidence="3">Transcriptional activator of gibberellin-dependent alpha-amylase expression in aleurone cells. Involved in pollen and floral organs development. May bind to the 5'-TAACAAA-3' box of alpha-amylase promoter.</text>
</comment>
<comment type="subcellular location">
    <subcellularLocation>
        <location evidence="4">Nucleus</location>
    </subcellularLocation>
</comment>
<comment type="induction">
    <text evidence="3">By gibberellin in aleurone cells.</text>
</comment>
<name>GAM1_ORYSI</name>
<protein>
    <recommendedName>
        <fullName>Transcription factor GAMYB</fullName>
    </recommendedName>
    <alternativeName>
        <fullName>OsGAMyb</fullName>
    </alternativeName>
</protein>
<evidence type="ECO:0000255" key="1">
    <source>
        <dbReference type="PROSITE-ProRule" id="PRU00625"/>
    </source>
</evidence>
<evidence type="ECO:0000256" key="2">
    <source>
        <dbReference type="SAM" id="MobiDB-lite"/>
    </source>
</evidence>
<evidence type="ECO:0000269" key="3">
    <source>
    </source>
</evidence>
<evidence type="ECO:0000305" key="4"/>
<keyword id="KW-0010">Activator</keyword>
<keyword id="KW-0217">Developmental protein</keyword>
<keyword id="KW-0221">Differentiation</keyword>
<keyword id="KW-0238">DNA-binding</keyword>
<keyword id="KW-0287">Flowering</keyword>
<keyword id="KW-0539">Nucleus</keyword>
<keyword id="KW-1185">Reference proteome</keyword>
<keyword id="KW-0677">Repeat</keyword>
<keyword id="KW-0804">Transcription</keyword>
<keyword id="KW-0805">Transcription regulation</keyword>
<sequence>MYRVKSESDCEMIHQEQMDSPVADDGSSGGSPHRGGGPPLKKGPWTSAEDAILVDYVKKHGEGNWNAVQKNTGLFRCGKSCRLRWANHLRPNLKKGAFTAEEERLIIQLHSKMGNKWARMAAHLPGRTDNEIKNYWNTRIKRCQRAGLPIYPTSVCNQSSNEDQQCSSDFDCGENLSNDLLNANGLYLPDFTCDNFIANSEALPYAPHLSAVSISNLLGQSFASKSCSFMDQVNQTGMLKQSDGVLPGLSDTINGVISSVDQFSNDSEKLKQAVGFDYLHEANSTSKIIAPFGGALNGSHAFLNGNFSASRPTSGPLKMELPSLQDTESDPNSWLKYTVAPALQPTELVDPYLQSPAATPSVKSECASPRNSGLLEELVHEAQTLRSGKNQQTSVISSSSSVGTPCNTTVLSPEFDMCQEYWEEQHPGPFLNDCAPFSGNSFTESTPPVSAASPDIFQLSKVSPAQSTSMGSGEQVMGPKYEPGDTSPHPENFRPDALFSGNTADPSVFNNAIAMLLGNDLSIDCRPVLGDGIMFNSSSWSNMPHACEMSEFK</sequence>
<accession>A2WW87</accession>
<accession>P93417</accession>
<accession>Q5VQR2</accession>
<accession>Q8SA38</accession>